<feature type="chain" id="PRO_1000001096" description="Octanoyltransferase">
    <location>
        <begin position="1"/>
        <end position="244"/>
    </location>
</feature>
<feature type="domain" description="BPL/LPL catalytic" evidence="2">
    <location>
        <begin position="49"/>
        <end position="237"/>
    </location>
</feature>
<feature type="active site" description="Acyl-thioester intermediate" evidence="1">
    <location>
        <position position="198"/>
    </location>
</feature>
<feature type="binding site" evidence="1">
    <location>
        <begin position="94"/>
        <end position="101"/>
    </location>
    <ligand>
        <name>substrate</name>
    </ligand>
</feature>
<feature type="binding site" evidence="1">
    <location>
        <begin position="167"/>
        <end position="169"/>
    </location>
    <ligand>
        <name>substrate</name>
    </ligand>
</feature>
<feature type="binding site" evidence="1">
    <location>
        <begin position="180"/>
        <end position="182"/>
    </location>
    <ligand>
        <name>substrate</name>
    </ligand>
</feature>
<feature type="site" description="Lowers pKa of active site Cys" evidence="1">
    <location>
        <position position="164"/>
    </location>
</feature>
<comment type="function">
    <text evidence="1">Catalyzes the transfer of endogenously produced octanoic acid from octanoyl-acyl-carrier-protein onto the lipoyl domains of lipoate-dependent enzymes. Lipoyl-ACP can also act as a substrate although octanoyl-ACP is likely to be the physiological substrate.</text>
</comment>
<comment type="catalytic activity">
    <reaction evidence="1">
        <text>octanoyl-[ACP] + L-lysyl-[protein] = N(6)-octanoyl-L-lysyl-[protein] + holo-[ACP] + H(+)</text>
        <dbReference type="Rhea" id="RHEA:17665"/>
        <dbReference type="Rhea" id="RHEA-COMP:9636"/>
        <dbReference type="Rhea" id="RHEA-COMP:9685"/>
        <dbReference type="Rhea" id="RHEA-COMP:9752"/>
        <dbReference type="Rhea" id="RHEA-COMP:9928"/>
        <dbReference type="ChEBI" id="CHEBI:15378"/>
        <dbReference type="ChEBI" id="CHEBI:29969"/>
        <dbReference type="ChEBI" id="CHEBI:64479"/>
        <dbReference type="ChEBI" id="CHEBI:78463"/>
        <dbReference type="ChEBI" id="CHEBI:78809"/>
        <dbReference type="EC" id="2.3.1.181"/>
    </reaction>
</comment>
<comment type="pathway">
    <text evidence="1">Protein modification; protein lipoylation via endogenous pathway; protein N(6)-(lipoyl)lysine from octanoyl-[acyl-carrier-protein]: step 1/2.</text>
</comment>
<comment type="subcellular location">
    <subcellularLocation>
        <location evidence="1">Cytoplasm</location>
    </subcellularLocation>
</comment>
<comment type="miscellaneous">
    <text evidence="1">In the reaction, the free carboxyl group of octanoic acid is attached via an amide linkage to the epsilon-amino group of a specific lysine residue of lipoyl domains of lipoate-dependent enzymes.</text>
</comment>
<comment type="similarity">
    <text evidence="1">Belongs to the LipB family.</text>
</comment>
<organism>
    <name type="scientific">Cytophaga hutchinsonii (strain ATCC 33406 / DSM 1761 / CIP 103989 / NBRC 15051 / NCIMB 9469 / D465)</name>
    <dbReference type="NCBI Taxonomy" id="269798"/>
    <lineage>
        <taxon>Bacteria</taxon>
        <taxon>Pseudomonadati</taxon>
        <taxon>Bacteroidota</taxon>
        <taxon>Cytophagia</taxon>
        <taxon>Cytophagales</taxon>
        <taxon>Cytophagaceae</taxon>
        <taxon>Cytophaga</taxon>
    </lineage>
</organism>
<proteinExistence type="inferred from homology"/>
<evidence type="ECO:0000255" key="1">
    <source>
        <dbReference type="HAMAP-Rule" id="MF_00013"/>
    </source>
</evidence>
<evidence type="ECO:0000255" key="2">
    <source>
        <dbReference type="PROSITE-ProRule" id="PRU01067"/>
    </source>
</evidence>
<name>LIPB_CYTH3</name>
<keyword id="KW-0012">Acyltransferase</keyword>
<keyword id="KW-0963">Cytoplasm</keyword>
<keyword id="KW-1185">Reference proteome</keyword>
<keyword id="KW-0808">Transferase</keyword>
<accession>Q11XW2</accession>
<gene>
    <name evidence="1" type="primary">lipB</name>
    <name type="ordered locus">CHU_0466</name>
</gene>
<protein>
    <recommendedName>
        <fullName evidence="1">Octanoyltransferase</fullName>
        <ecNumber evidence="1">2.3.1.181</ecNumber>
    </recommendedName>
    <alternativeName>
        <fullName evidence="1">Lipoate-protein ligase B</fullName>
    </alternativeName>
    <alternativeName>
        <fullName evidence="1">Lipoyl/octanoyl transferase</fullName>
    </alternativeName>
    <alternativeName>
        <fullName evidence="1">Octanoyl-[acyl-carrier-protein]-protein N-octanoyltransferase</fullName>
    </alternativeName>
</protein>
<sequence length="244" mass="27710">MHKNTNKSVLVEDLGLIDYQQAWDYQTQLFNSTIEKKLALRDLPEDEQVAPGNFLIFCEHPHVYTLGKSGKREHLLISEAQLQHAQAAYYEINRGGDITYHGPGQLVGYPIFDLDNFFTDIHKYLRYIEEAIILTLADFNIVAGRIDGLTGVWIESDNPLKARKICAMGVKASRWVTMHGFALNVQPDLTYFKNIVPCGIDDKAVTSIEQELNTTVSMQAVKDYLLKHLTALFELHIENTTHTT</sequence>
<reference key="1">
    <citation type="journal article" date="2007" name="Appl. Environ. Microbiol.">
        <title>Genome sequence of the cellulolytic gliding bacterium Cytophaga hutchinsonii.</title>
        <authorList>
            <person name="Xie G."/>
            <person name="Bruce D.C."/>
            <person name="Challacombe J.F."/>
            <person name="Chertkov O."/>
            <person name="Detter J.C."/>
            <person name="Gilna P."/>
            <person name="Han C.S."/>
            <person name="Lucas S."/>
            <person name="Misra M."/>
            <person name="Myers G.L."/>
            <person name="Richardson P."/>
            <person name="Tapia R."/>
            <person name="Thayer N."/>
            <person name="Thompson L.S."/>
            <person name="Brettin T.S."/>
            <person name="Henrissat B."/>
            <person name="Wilson D.B."/>
            <person name="McBride M.J."/>
        </authorList>
    </citation>
    <scope>NUCLEOTIDE SEQUENCE [LARGE SCALE GENOMIC DNA]</scope>
    <source>
        <strain>ATCC 33406 / DSM 1761 / JCM 20678 / CIP 103989 / IAM 12607 / NBRC 15051 / NCIMB 9469 / D465</strain>
    </source>
</reference>
<dbReference type="EC" id="2.3.1.181" evidence="1"/>
<dbReference type="EMBL" id="CP000383">
    <property type="protein sequence ID" value="ABG57755.1"/>
    <property type="molecule type" value="Genomic_DNA"/>
</dbReference>
<dbReference type="RefSeq" id="WP_011583870.1">
    <property type="nucleotide sequence ID" value="NC_008255.1"/>
</dbReference>
<dbReference type="SMR" id="Q11XW2"/>
<dbReference type="STRING" id="269798.CHU_0466"/>
<dbReference type="KEGG" id="chu:CHU_0466"/>
<dbReference type="eggNOG" id="COG0321">
    <property type="taxonomic scope" value="Bacteria"/>
</dbReference>
<dbReference type="HOGENOM" id="CLU_035168_1_3_10"/>
<dbReference type="OrthoDB" id="9787061at2"/>
<dbReference type="UniPathway" id="UPA00538">
    <property type="reaction ID" value="UER00592"/>
</dbReference>
<dbReference type="Proteomes" id="UP000001822">
    <property type="component" value="Chromosome"/>
</dbReference>
<dbReference type="GO" id="GO:0005737">
    <property type="term" value="C:cytoplasm"/>
    <property type="evidence" value="ECO:0007669"/>
    <property type="project" value="UniProtKB-SubCell"/>
</dbReference>
<dbReference type="GO" id="GO:0033819">
    <property type="term" value="F:lipoyl(octanoyl) transferase activity"/>
    <property type="evidence" value="ECO:0007669"/>
    <property type="project" value="UniProtKB-EC"/>
</dbReference>
<dbReference type="GO" id="GO:0036211">
    <property type="term" value="P:protein modification process"/>
    <property type="evidence" value="ECO:0007669"/>
    <property type="project" value="InterPro"/>
</dbReference>
<dbReference type="CDD" id="cd16444">
    <property type="entry name" value="LipB"/>
    <property type="match status" value="1"/>
</dbReference>
<dbReference type="FunFam" id="3.30.930.10:FF:000035">
    <property type="entry name" value="Putative lipoyltransferase 2, mitochondrial"/>
    <property type="match status" value="1"/>
</dbReference>
<dbReference type="Gene3D" id="3.30.930.10">
    <property type="entry name" value="Bira Bifunctional Protein, Domain 2"/>
    <property type="match status" value="1"/>
</dbReference>
<dbReference type="HAMAP" id="MF_00013">
    <property type="entry name" value="LipB"/>
    <property type="match status" value="1"/>
</dbReference>
<dbReference type="InterPro" id="IPR045864">
    <property type="entry name" value="aa-tRNA-synth_II/BPL/LPL"/>
</dbReference>
<dbReference type="InterPro" id="IPR004143">
    <property type="entry name" value="BPL_LPL_catalytic"/>
</dbReference>
<dbReference type="InterPro" id="IPR000544">
    <property type="entry name" value="Octanoyltransferase"/>
</dbReference>
<dbReference type="InterPro" id="IPR020605">
    <property type="entry name" value="Octanoyltransferase_CS"/>
</dbReference>
<dbReference type="NCBIfam" id="TIGR00214">
    <property type="entry name" value="lipB"/>
    <property type="match status" value="1"/>
</dbReference>
<dbReference type="NCBIfam" id="NF010925">
    <property type="entry name" value="PRK14345.1"/>
    <property type="match status" value="1"/>
</dbReference>
<dbReference type="PANTHER" id="PTHR10993">
    <property type="entry name" value="OCTANOYLTRANSFERASE"/>
    <property type="match status" value="1"/>
</dbReference>
<dbReference type="PANTHER" id="PTHR10993:SF12">
    <property type="entry name" value="OCTANOYLTRANSFERASE"/>
    <property type="match status" value="1"/>
</dbReference>
<dbReference type="Pfam" id="PF21948">
    <property type="entry name" value="LplA-B_cat"/>
    <property type="match status" value="1"/>
</dbReference>
<dbReference type="PIRSF" id="PIRSF016262">
    <property type="entry name" value="LPLase"/>
    <property type="match status" value="1"/>
</dbReference>
<dbReference type="SUPFAM" id="SSF55681">
    <property type="entry name" value="Class II aaRS and biotin synthetases"/>
    <property type="match status" value="1"/>
</dbReference>
<dbReference type="PROSITE" id="PS51733">
    <property type="entry name" value="BPL_LPL_CATALYTIC"/>
    <property type="match status" value="1"/>
</dbReference>
<dbReference type="PROSITE" id="PS01313">
    <property type="entry name" value="LIPB"/>
    <property type="match status" value="1"/>
</dbReference>